<organism>
    <name type="scientific">Trypanosoma brucei brucei (strain 927/4 GUTat10.1)</name>
    <dbReference type="NCBI Taxonomy" id="185431"/>
    <lineage>
        <taxon>Eukaryota</taxon>
        <taxon>Discoba</taxon>
        <taxon>Euglenozoa</taxon>
        <taxon>Kinetoplastea</taxon>
        <taxon>Metakinetoplastina</taxon>
        <taxon>Trypanosomatida</taxon>
        <taxon>Trypanosomatidae</taxon>
        <taxon>Trypanosoma</taxon>
    </lineage>
</organism>
<accession>Q38BU9</accession>
<proteinExistence type="inferred from homology"/>
<gene>
    <name type="ORF">Tb10.70.4600</name>
</gene>
<name>GUF1_TRYB2</name>
<reference key="1">
    <citation type="journal article" date="2005" name="Science">
        <title>The genome of the African trypanosome Trypanosoma brucei.</title>
        <authorList>
            <person name="Berriman M."/>
            <person name="Ghedin E."/>
            <person name="Hertz-Fowler C."/>
            <person name="Blandin G."/>
            <person name="Renauld H."/>
            <person name="Bartholomeu D.C."/>
            <person name="Lennard N.J."/>
            <person name="Caler E."/>
            <person name="Hamlin N.E."/>
            <person name="Haas B."/>
            <person name="Bohme U."/>
            <person name="Hannick L."/>
            <person name="Aslett M.A."/>
            <person name="Shallom J."/>
            <person name="Marcello L."/>
            <person name="Hou L."/>
            <person name="Wickstead B."/>
            <person name="Alsmark U.C.M."/>
            <person name="Arrowsmith C."/>
            <person name="Atkin R.J."/>
            <person name="Barron A.J."/>
            <person name="Bringaud F."/>
            <person name="Brooks K."/>
            <person name="Carrington M."/>
            <person name="Cherevach I."/>
            <person name="Chillingworth T.J."/>
            <person name="Churcher C."/>
            <person name="Clark L.N."/>
            <person name="Corton C.H."/>
            <person name="Cronin A."/>
            <person name="Davies R.M."/>
            <person name="Doggett J."/>
            <person name="Djikeng A."/>
            <person name="Feldblyum T."/>
            <person name="Field M.C."/>
            <person name="Fraser A."/>
            <person name="Goodhead I."/>
            <person name="Hance Z."/>
            <person name="Harper D."/>
            <person name="Harris B.R."/>
            <person name="Hauser H."/>
            <person name="Hostetler J."/>
            <person name="Ivens A."/>
            <person name="Jagels K."/>
            <person name="Johnson D."/>
            <person name="Johnson J."/>
            <person name="Jones K."/>
            <person name="Kerhornou A.X."/>
            <person name="Koo H."/>
            <person name="Larke N."/>
            <person name="Landfear S."/>
            <person name="Larkin C."/>
            <person name="Leech V."/>
            <person name="Line A."/>
            <person name="Lord A."/>
            <person name="Macleod A."/>
            <person name="Mooney P.J."/>
            <person name="Moule S."/>
            <person name="Martin D.M."/>
            <person name="Morgan G.W."/>
            <person name="Mungall K."/>
            <person name="Norbertczak H."/>
            <person name="Ormond D."/>
            <person name="Pai G."/>
            <person name="Peacock C.S."/>
            <person name="Peterson J."/>
            <person name="Quail M.A."/>
            <person name="Rabbinowitsch E."/>
            <person name="Rajandream M.A."/>
            <person name="Reitter C."/>
            <person name="Salzberg S.L."/>
            <person name="Sanders M."/>
            <person name="Schobel S."/>
            <person name="Sharp S."/>
            <person name="Simmonds M."/>
            <person name="Simpson A.J."/>
            <person name="Tallon L."/>
            <person name="Turner C.M."/>
            <person name="Tait A."/>
            <person name="Tivey A.R."/>
            <person name="Van Aken S."/>
            <person name="Walker D."/>
            <person name="Wanless D."/>
            <person name="Wang S."/>
            <person name="White B."/>
            <person name="White O."/>
            <person name="Whitehead S."/>
            <person name="Woodward J."/>
            <person name="Wortman J."/>
            <person name="Adams M.D."/>
            <person name="Embley T.M."/>
            <person name="Gull K."/>
            <person name="Ullu E."/>
            <person name="Barry J.D."/>
            <person name="Fairlamb A.H."/>
            <person name="Opperdoes F."/>
            <person name="Barrell B.G."/>
            <person name="Donelson J.E."/>
            <person name="Hall N."/>
            <person name="Fraser C.M."/>
            <person name="Melville S.E."/>
            <person name="El-Sayed N.M.A."/>
        </authorList>
    </citation>
    <scope>NUCLEOTIDE SEQUENCE [LARGE SCALE GENOMIC DNA]</scope>
    <source>
        <strain evidence="3">927/4 GUTat10.1</strain>
    </source>
</reference>
<dbReference type="EC" id="3.6.5.-"/>
<dbReference type="EMBL" id="CM000208">
    <property type="protein sequence ID" value="EAN77721.1"/>
    <property type="molecule type" value="Genomic_DNA"/>
</dbReference>
<dbReference type="RefSeq" id="XP_822549.1">
    <property type="nucleotide sequence ID" value="XM_817456.1"/>
</dbReference>
<dbReference type="SMR" id="Q38BU9"/>
<dbReference type="FunCoup" id="Q38BU9">
    <property type="interactions" value="198"/>
</dbReference>
<dbReference type="STRING" id="185431.Q38BU9"/>
<dbReference type="PaxDb" id="5691-EAN77721"/>
<dbReference type="GeneID" id="3662988"/>
<dbReference type="KEGG" id="tbr:Tb10.70.4600"/>
<dbReference type="VEuPathDB" id="TriTrypDB:Tb927.10.2960"/>
<dbReference type="eggNOG" id="KOG0462">
    <property type="taxonomic scope" value="Eukaryota"/>
</dbReference>
<dbReference type="InParanoid" id="Q38BU9"/>
<dbReference type="OMA" id="EYSFVGY"/>
<dbReference type="OrthoDB" id="1074at2759"/>
<dbReference type="Proteomes" id="UP000008524">
    <property type="component" value="Chromosome 10"/>
</dbReference>
<dbReference type="GO" id="GO:0020023">
    <property type="term" value="C:kinetoplast"/>
    <property type="evidence" value="ECO:0000314"/>
    <property type="project" value="GeneDB"/>
</dbReference>
<dbReference type="GO" id="GO:0005743">
    <property type="term" value="C:mitochondrial inner membrane"/>
    <property type="evidence" value="ECO:0007669"/>
    <property type="project" value="UniProtKB-SubCell"/>
</dbReference>
<dbReference type="GO" id="GO:0005759">
    <property type="term" value="C:mitochondrial matrix"/>
    <property type="evidence" value="ECO:0007669"/>
    <property type="project" value="UniProtKB-UniRule"/>
</dbReference>
<dbReference type="GO" id="GO:0005739">
    <property type="term" value="C:mitochondrion"/>
    <property type="evidence" value="ECO:0000314"/>
    <property type="project" value="GeneDB"/>
</dbReference>
<dbReference type="GO" id="GO:0005525">
    <property type="term" value="F:GTP binding"/>
    <property type="evidence" value="ECO:0007669"/>
    <property type="project" value="UniProtKB-UniRule"/>
</dbReference>
<dbReference type="GO" id="GO:0003924">
    <property type="term" value="F:GTPase activity"/>
    <property type="evidence" value="ECO:0007669"/>
    <property type="project" value="UniProtKB-UniRule"/>
</dbReference>
<dbReference type="GO" id="GO:0097177">
    <property type="term" value="F:mitochondrial ribosome binding"/>
    <property type="evidence" value="ECO:0000318"/>
    <property type="project" value="GO_Central"/>
</dbReference>
<dbReference type="GO" id="GO:0045727">
    <property type="term" value="P:positive regulation of translation"/>
    <property type="evidence" value="ECO:0000318"/>
    <property type="project" value="GO_Central"/>
</dbReference>
<dbReference type="GO" id="GO:0006412">
    <property type="term" value="P:translation"/>
    <property type="evidence" value="ECO:0007669"/>
    <property type="project" value="UniProtKB-KW"/>
</dbReference>
<dbReference type="CDD" id="cd16260">
    <property type="entry name" value="EF4_III"/>
    <property type="match status" value="1"/>
</dbReference>
<dbReference type="CDD" id="cd01890">
    <property type="entry name" value="LepA"/>
    <property type="match status" value="1"/>
</dbReference>
<dbReference type="CDD" id="cd03709">
    <property type="entry name" value="lepA_C"/>
    <property type="match status" value="1"/>
</dbReference>
<dbReference type="FunFam" id="3.30.70.240:FF:000007">
    <property type="entry name" value="Translation factor GUF1, mitochondrial"/>
    <property type="match status" value="1"/>
</dbReference>
<dbReference type="FunFam" id="3.30.70.2570:FF:000001">
    <property type="entry name" value="Translation factor GUF1, mitochondrial"/>
    <property type="match status" value="1"/>
</dbReference>
<dbReference type="Gene3D" id="3.30.70.240">
    <property type="match status" value="1"/>
</dbReference>
<dbReference type="Gene3D" id="3.30.70.2570">
    <property type="entry name" value="Elongation factor 4, C-terminal domain"/>
    <property type="match status" value="1"/>
</dbReference>
<dbReference type="Gene3D" id="3.30.70.870">
    <property type="entry name" value="Elongation Factor G (Translational Gtpase), domain 3"/>
    <property type="match status" value="1"/>
</dbReference>
<dbReference type="Gene3D" id="3.40.50.300">
    <property type="entry name" value="P-loop containing nucleotide triphosphate hydrolases"/>
    <property type="match status" value="1"/>
</dbReference>
<dbReference type="Gene3D" id="2.40.30.10">
    <property type="entry name" value="Translation factors"/>
    <property type="match status" value="1"/>
</dbReference>
<dbReference type="HAMAP" id="MF_00071">
    <property type="entry name" value="LepA"/>
    <property type="match status" value="1"/>
</dbReference>
<dbReference type="InterPro" id="IPR006297">
    <property type="entry name" value="EF-4"/>
</dbReference>
<dbReference type="InterPro" id="IPR035647">
    <property type="entry name" value="EFG_III/V"/>
</dbReference>
<dbReference type="InterPro" id="IPR000640">
    <property type="entry name" value="EFG_V-like"/>
</dbReference>
<dbReference type="InterPro" id="IPR038363">
    <property type="entry name" value="LepA_C_sf"/>
</dbReference>
<dbReference type="InterPro" id="IPR013842">
    <property type="entry name" value="LepA_CTD"/>
</dbReference>
<dbReference type="InterPro" id="IPR035654">
    <property type="entry name" value="LepA_IV"/>
</dbReference>
<dbReference type="InterPro" id="IPR027417">
    <property type="entry name" value="P-loop_NTPase"/>
</dbReference>
<dbReference type="InterPro" id="IPR005225">
    <property type="entry name" value="Small_GTP-bd"/>
</dbReference>
<dbReference type="InterPro" id="IPR000795">
    <property type="entry name" value="T_Tr_GTP-bd_dom"/>
</dbReference>
<dbReference type="InterPro" id="IPR009000">
    <property type="entry name" value="Transl_B-barrel_sf"/>
</dbReference>
<dbReference type="NCBIfam" id="TIGR00231">
    <property type="entry name" value="small_GTP"/>
    <property type="match status" value="1"/>
</dbReference>
<dbReference type="PANTHER" id="PTHR43512:SF7">
    <property type="entry name" value="TRANSLATION FACTOR GUF1, MITOCHONDRIAL"/>
    <property type="match status" value="1"/>
</dbReference>
<dbReference type="PANTHER" id="PTHR43512">
    <property type="entry name" value="TRANSLATION FACTOR GUF1-RELATED"/>
    <property type="match status" value="1"/>
</dbReference>
<dbReference type="Pfam" id="PF00679">
    <property type="entry name" value="EFG_C"/>
    <property type="match status" value="1"/>
</dbReference>
<dbReference type="Pfam" id="PF00009">
    <property type="entry name" value="GTP_EFTU"/>
    <property type="match status" value="1"/>
</dbReference>
<dbReference type="Pfam" id="PF06421">
    <property type="entry name" value="LepA_C"/>
    <property type="match status" value="1"/>
</dbReference>
<dbReference type="PRINTS" id="PR00315">
    <property type="entry name" value="ELONGATNFCT"/>
</dbReference>
<dbReference type="SUPFAM" id="SSF54980">
    <property type="entry name" value="EF-G C-terminal domain-like"/>
    <property type="match status" value="2"/>
</dbReference>
<dbReference type="SUPFAM" id="SSF52540">
    <property type="entry name" value="P-loop containing nucleoside triphosphate hydrolases"/>
    <property type="match status" value="1"/>
</dbReference>
<dbReference type="SUPFAM" id="SSF50447">
    <property type="entry name" value="Translation proteins"/>
    <property type="match status" value="1"/>
</dbReference>
<dbReference type="PROSITE" id="PS00301">
    <property type="entry name" value="G_TR_1"/>
    <property type="match status" value="1"/>
</dbReference>
<dbReference type="PROSITE" id="PS51722">
    <property type="entry name" value="G_TR_2"/>
    <property type="match status" value="1"/>
</dbReference>
<protein>
    <recommendedName>
        <fullName evidence="1">Translation factor GUF1 homolog, mitochondrial</fullName>
        <ecNumber>3.6.5.-</ecNumber>
    </recommendedName>
    <alternativeName>
        <fullName evidence="1">Elongation factor 4 homolog</fullName>
        <shortName evidence="1">EF-4</shortName>
    </alternativeName>
    <alternativeName>
        <fullName evidence="1">GTPase GUF1 homolog</fullName>
    </alternativeName>
    <alternativeName>
        <fullName evidence="1">Ribosomal back-translocase</fullName>
    </alternativeName>
</protein>
<sequence>MRLWNRFSRLGNLLCACAACGCSFTPWRCSSSPLLSSFSAYNMSSGNRVTSSVGGSSGATEVCPSHTPLSSSTLLRYTIAPSEPTMGSPWQTSEESASRRLAALTSYPPSNIRNVAVVAHVDHGKTTLSDVLLRRTGVLKGSVNAGAYTDRLLVERERGITVKSQTCSMFLKYGGSEFLLNLIDTPGHVDFQYEVSRSVRAAQAVLLLVDVAQGIEAQTMSHFHMALDQGLAIIPVFTKMDCVLNDTTVDAALQQLEDSTGLLRSEVVFTSAKEQLGVEALLQAIIERVPSPSGAIGLSDVCQLPPLLPGSTARVAMEAEMVPLRAILLDSWTRECGGGLYRPPSKTSSALSGNVKIDEDKDTVTCLVSVIDGTLTARTNILLYHSQKRYEAREVGVIHPELRPTGALTVGMVGYVVFTRVQREDFSVGETLYTLPTRKFTRGGIAPVPGFRRVHPVVFAGFYPDEGEYVTQLREAVEKLRMNDPAVTVEPLECQALGSGLQLGFLGVLHMQIFQERLLSEFGQRVLVTPPVVQYKYREAAGGDDQPPKPLSVHTWRWLHEGVSCYMEPHVTATVVTPSEYAQIIDGEAQRHYRGKQLDMRVMDDARVLLRYKMPLADMVRGFFTFVKSQSHGYASLEYDELVYEEADLVRVDIVVQKARISALAVICPRHEAPSVGKRIVASLKSNLTRTAVDIPLQALVGSKVVARETVRAYRKDVTAKIHAGDISRKQKKWNDQKKGKERMARRTVGGVTLDQSVLAAAMGATAL</sequence>
<keyword id="KW-0342">GTP-binding</keyword>
<keyword id="KW-0378">Hydrolase</keyword>
<keyword id="KW-0472">Membrane</keyword>
<keyword id="KW-0496">Mitochondrion</keyword>
<keyword id="KW-0999">Mitochondrion inner membrane</keyword>
<keyword id="KW-0547">Nucleotide-binding</keyword>
<keyword id="KW-0648">Protein biosynthesis</keyword>
<keyword id="KW-1185">Reference proteome</keyword>
<keyword id="KW-0809">Transit peptide</keyword>
<feature type="transit peptide" description="Mitochondrion" evidence="1">
    <location>
        <begin position="1"/>
        <end position="29"/>
    </location>
</feature>
<feature type="chain" id="PRO_0000402860" description="Translation factor GUF1 homolog, mitochondrial">
    <location>
        <begin position="30"/>
        <end position="768"/>
    </location>
</feature>
<feature type="domain" description="tr-type G">
    <location>
        <begin position="110"/>
        <end position="293"/>
    </location>
</feature>
<feature type="binding site" evidence="1">
    <location>
        <begin position="119"/>
        <end position="126"/>
    </location>
    <ligand>
        <name>GTP</name>
        <dbReference type="ChEBI" id="CHEBI:37565"/>
    </ligand>
</feature>
<feature type="binding site" evidence="1">
    <location>
        <begin position="184"/>
        <end position="188"/>
    </location>
    <ligand>
        <name>GTP</name>
        <dbReference type="ChEBI" id="CHEBI:37565"/>
    </ligand>
</feature>
<feature type="binding site" evidence="1">
    <location>
        <begin position="238"/>
        <end position="241"/>
    </location>
    <ligand>
        <name>GTP</name>
        <dbReference type="ChEBI" id="CHEBI:37565"/>
    </ligand>
</feature>
<evidence type="ECO:0000255" key="1">
    <source>
        <dbReference type="HAMAP-Rule" id="MF_03137"/>
    </source>
</evidence>
<evidence type="ECO:0000305" key="2"/>
<evidence type="ECO:0000312" key="3">
    <source>
        <dbReference type="Proteomes" id="UP000008524"/>
    </source>
</evidence>
<comment type="function">
    <text evidence="1">Promotes mitochondrial protein synthesis. May act as a fidelity factor of the translation reaction, by catalyzing a one-codon backward translocation of tRNAs on improperly translocated ribosomes. Binds to mitochondrial ribosomes in a GTP-dependent manner.</text>
</comment>
<comment type="catalytic activity">
    <reaction evidence="1">
        <text>GTP + H2O = GDP + phosphate + H(+)</text>
        <dbReference type="Rhea" id="RHEA:19669"/>
        <dbReference type="ChEBI" id="CHEBI:15377"/>
        <dbReference type="ChEBI" id="CHEBI:15378"/>
        <dbReference type="ChEBI" id="CHEBI:37565"/>
        <dbReference type="ChEBI" id="CHEBI:43474"/>
        <dbReference type="ChEBI" id="CHEBI:58189"/>
    </reaction>
</comment>
<comment type="subcellular location">
    <subcellularLocation>
        <location evidence="1">Mitochondrion inner membrane</location>
        <topology evidence="1">Peripheral membrane protein</topology>
        <orientation evidence="1">Matrix side</orientation>
    </subcellularLocation>
</comment>
<comment type="similarity">
    <text evidence="2">Belongs to the TRAFAC class translation factor GTPase superfamily. Classic translation factor GTPase family. LepA subfamily.</text>
</comment>